<keyword id="KW-0963">Cytoplasm</keyword>
<keyword id="KW-0226">DNA condensation</keyword>
<keyword id="KW-0238">DNA-binding</keyword>
<keyword id="KW-0408">Iron</keyword>
<keyword id="KW-0409">Iron storage</keyword>
<keyword id="KW-0479">Metal-binding</keyword>
<keyword id="KW-0560">Oxidoreductase</keyword>
<keyword id="KW-1185">Reference proteome</keyword>
<proteinExistence type="inferred from homology"/>
<sequence>MSTAKLVKSKATNLLYTRNDVSDSEKKATVELLNRQVIQFIDLSLITKQAHWNMRGANFIAVHEMLDGFRTALIDHLDTMAERAVQLGGVALGTTQVINSKTPLKSYPLDIHNVQDHLKELADRYAIVANDVRKAIGEAKDDDTADILTAASRDLDKFLWFIESNIE</sequence>
<protein>
    <recommendedName>
        <fullName>DNA protection during starvation protein</fullName>
        <ecNumber>1.16.-.-</ecNumber>
    </recommendedName>
</protein>
<evidence type="ECO:0000250" key="1"/>
<evidence type="ECO:0000305" key="2"/>
<reference key="1">
    <citation type="journal article" date="2002" name="Nucleic Acids Res.">
        <title>Genome sequence of Shigella flexneri 2a: insights into pathogenicity through comparison with genomes of Escherichia coli K12 and O157.</title>
        <authorList>
            <person name="Jin Q."/>
            <person name="Yuan Z."/>
            <person name="Xu J."/>
            <person name="Wang Y."/>
            <person name="Shen Y."/>
            <person name="Lu W."/>
            <person name="Wang J."/>
            <person name="Liu H."/>
            <person name="Yang J."/>
            <person name="Yang F."/>
            <person name="Zhang X."/>
            <person name="Zhang J."/>
            <person name="Yang G."/>
            <person name="Wu H."/>
            <person name="Qu D."/>
            <person name="Dong J."/>
            <person name="Sun L."/>
            <person name="Xue Y."/>
            <person name="Zhao A."/>
            <person name="Gao Y."/>
            <person name="Zhu J."/>
            <person name="Kan B."/>
            <person name="Ding K."/>
            <person name="Chen S."/>
            <person name="Cheng H."/>
            <person name="Yao Z."/>
            <person name="He B."/>
            <person name="Chen R."/>
            <person name="Ma D."/>
            <person name="Qiang B."/>
            <person name="Wen Y."/>
            <person name="Hou Y."/>
            <person name="Yu J."/>
        </authorList>
    </citation>
    <scope>NUCLEOTIDE SEQUENCE [LARGE SCALE GENOMIC DNA]</scope>
    <source>
        <strain>301 / Serotype 2a</strain>
    </source>
</reference>
<reference key="2">
    <citation type="journal article" date="2003" name="Infect. Immun.">
        <title>Complete genome sequence and comparative genomics of Shigella flexneri serotype 2a strain 2457T.</title>
        <authorList>
            <person name="Wei J."/>
            <person name="Goldberg M.B."/>
            <person name="Burland V."/>
            <person name="Venkatesan M.M."/>
            <person name="Deng W."/>
            <person name="Fournier G."/>
            <person name="Mayhew G.F."/>
            <person name="Plunkett G. III"/>
            <person name="Rose D.J."/>
            <person name="Darling A."/>
            <person name="Mau B."/>
            <person name="Perna N.T."/>
            <person name="Payne S.M."/>
            <person name="Runyen-Janecky L.J."/>
            <person name="Zhou S."/>
            <person name="Schwartz D.C."/>
            <person name="Blattner F.R."/>
        </authorList>
    </citation>
    <scope>NUCLEOTIDE SEQUENCE [LARGE SCALE GENOMIC DNA]</scope>
    <source>
        <strain>ATCC 700930 / 2457T / Serotype 2a</strain>
    </source>
</reference>
<accession>P0ABT4</accession>
<accession>P27430</accession>
<dbReference type="EC" id="1.16.-.-"/>
<dbReference type="EMBL" id="AE005674">
    <property type="protein sequence ID" value="AAN42397.2"/>
    <property type="molecule type" value="Genomic_DNA"/>
</dbReference>
<dbReference type="EMBL" id="AE014073">
    <property type="protein sequence ID" value="AAP16273.1"/>
    <property type="molecule type" value="Genomic_DNA"/>
</dbReference>
<dbReference type="RefSeq" id="NP_706690.2">
    <property type="nucleotide sequence ID" value="NC_004337.2"/>
</dbReference>
<dbReference type="RefSeq" id="WP_000100800.1">
    <property type="nucleotide sequence ID" value="NZ_WPGW01000128.1"/>
</dbReference>
<dbReference type="SMR" id="P0ABT4"/>
<dbReference type="STRING" id="198214.SF0763"/>
<dbReference type="PaxDb" id="198214-SF0763"/>
<dbReference type="GeneID" id="1023737"/>
<dbReference type="GeneID" id="93776616"/>
<dbReference type="KEGG" id="sfl:SF0763"/>
<dbReference type="KEGG" id="sfx:S0805"/>
<dbReference type="PATRIC" id="fig|198214.7.peg.887"/>
<dbReference type="HOGENOM" id="CLU_098183_1_2_6"/>
<dbReference type="Proteomes" id="UP000001006">
    <property type="component" value="Chromosome"/>
</dbReference>
<dbReference type="Proteomes" id="UP000002673">
    <property type="component" value="Chromosome"/>
</dbReference>
<dbReference type="GO" id="GO:0005737">
    <property type="term" value="C:cytoplasm"/>
    <property type="evidence" value="ECO:0007669"/>
    <property type="project" value="UniProtKB-UniRule"/>
</dbReference>
<dbReference type="GO" id="GO:0009295">
    <property type="term" value="C:nucleoid"/>
    <property type="evidence" value="ECO:0007669"/>
    <property type="project" value="UniProtKB-SubCell"/>
</dbReference>
<dbReference type="GO" id="GO:0003677">
    <property type="term" value="F:DNA binding"/>
    <property type="evidence" value="ECO:0007669"/>
    <property type="project" value="UniProtKB-UniRule"/>
</dbReference>
<dbReference type="GO" id="GO:0008199">
    <property type="term" value="F:ferric iron binding"/>
    <property type="evidence" value="ECO:0007669"/>
    <property type="project" value="UniProtKB-UniRule"/>
</dbReference>
<dbReference type="GO" id="GO:0016722">
    <property type="term" value="F:oxidoreductase activity, acting on metal ions"/>
    <property type="evidence" value="ECO:0007669"/>
    <property type="project" value="InterPro"/>
</dbReference>
<dbReference type="GO" id="GO:0030261">
    <property type="term" value="P:chromosome condensation"/>
    <property type="evidence" value="ECO:0007669"/>
    <property type="project" value="UniProtKB-KW"/>
</dbReference>
<dbReference type="GO" id="GO:0006879">
    <property type="term" value="P:intracellular iron ion homeostasis"/>
    <property type="evidence" value="ECO:0007669"/>
    <property type="project" value="UniProtKB-KW"/>
</dbReference>
<dbReference type="CDD" id="cd01043">
    <property type="entry name" value="DPS"/>
    <property type="match status" value="1"/>
</dbReference>
<dbReference type="FunFam" id="1.20.1260.10:FF:000003">
    <property type="entry name" value="DNA protection during starvation protein"/>
    <property type="match status" value="1"/>
</dbReference>
<dbReference type="Gene3D" id="1.20.1260.10">
    <property type="match status" value="1"/>
</dbReference>
<dbReference type="HAMAP" id="MF_01441">
    <property type="entry name" value="Dps"/>
    <property type="match status" value="1"/>
</dbReference>
<dbReference type="InterPro" id="IPR002177">
    <property type="entry name" value="DPS_DNA-bd"/>
</dbReference>
<dbReference type="InterPro" id="IPR023188">
    <property type="entry name" value="DPS_DNA-bd_CS"/>
</dbReference>
<dbReference type="InterPro" id="IPR023067">
    <property type="entry name" value="Dps_gammaproteobac"/>
</dbReference>
<dbReference type="InterPro" id="IPR012347">
    <property type="entry name" value="Ferritin-like"/>
</dbReference>
<dbReference type="InterPro" id="IPR009078">
    <property type="entry name" value="Ferritin-like_SF"/>
</dbReference>
<dbReference type="InterPro" id="IPR008331">
    <property type="entry name" value="Ferritin_DPS_dom"/>
</dbReference>
<dbReference type="NCBIfam" id="NF006975">
    <property type="entry name" value="PRK09448.1"/>
    <property type="match status" value="1"/>
</dbReference>
<dbReference type="PANTHER" id="PTHR42932:SF3">
    <property type="entry name" value="DNA PROTECTION DURING STARVATION PROTEIN"/>
    <property type="match status" value="1"/>
</dbReference>
<dbReference type="PANTHER" id="PTHR42932">
    <property type="entry name" value="GENERAL STRESS PROTEIN 20U"/>
    <property type="match status" value="1"/>
</dbReference>
<dbReference type="Pfam" id="PF00210">
    <property type="entry name" value="Ferritin"/>
    <property type="match status" value="1"/>
</dbReference>
<dbReference type="PIRSF" id="PIRSF005900">
    <property type="entry name" value="Dps"/>
    <property type="match status" value="1"/>
</dbReference>
<dbReference type="PRINTS" id="PR01346">
    <property type="entry name" value="HELNAPAPROT"/>
</dbReference>
<dbReference type="SUPFAM" id="SSF47240">
    <property type="entry name" value="Ferritin-like"/>
    <property type="match status" value="1"/>
</dbReference>
<dbReference type="PROSITE" id="PS00818">
    <property type="entry name" value="DPS_1"/>
    <property type="match status" value="1"/>
</dbReference>
<dbReference type="PROSITE" id="PS00819">
    <property type="entry name" value="DPS_2"/>
    <property type="match status" value="1"/>
</dbReference>
<gene>
    <name type="primary">dps</name>
    <name type="ordered locus">SF0763</name>
    <name type="ordered locus">S0805</name>
</gene>
<feature type="initiator methionine" description="Removed" evidence="1">
    <location>
        <position position="1"/>
    </location>
</feature>
<feature type="chain" id="PRO_0000201652" description="DNA protection during starvation protein">
    <location>
        <begin position="2"/>
        <end position="167"/>
    </location>
</feature>
<feature type="binding site" evidence="1">
    <location>
        <position position="51"/>
    </location>
    <ligand>
        <name>Fe cation</name>
        <dbReference type="ChEBI" id="CHEBI:24875"/>
        <label>1</label>
        <note>ligand shared between two dodecameric partners</note>
    </ligand>
</feature>
<feature type="binding site" description="in other chain" evidence="1">
    <location>
        <position position="78"/>
    </location>
    <ligand>
        <name>Fe cation</name>
        <dbReference type="ChEBI" id="CHEBI:24875"/>
        <label>1</label>
        <note>ligand shared between two dodecameric partners</note>
    </ligand>
</feature>
<feature type="binding site" description="in other chain" evidence="1">
    <location>
        <position position="82"/>
    </location>
    <ligand>
        <name>Fe cation</name>
        <dbReference type="ChEBI" id="CHEBI:24875"/>
        <label>1</label>
        <note>ligand shared between two dodecameric partners</note>
    </ligand>
</feature>
<feature type="binding site" evidence="1">
    <location>
        <position position="82"/>
    </location>
    <ligand>
        <name>Fe cation</name>
        <dbReference type="ChEBI" id="CHEBI:24875"/>
        <label>2</label>
    </ligand>
</feature>
<organism>
    <name type="scientific">Shigella flexneri</name>
    <dbReference type="NCBI Taxonomy" id="623"/>
    <lineage>
        <taxon>Bacteria</taxon>
        <taxon>Pseudomonadati</taxon>
        <taxon>Pseudomonadota</taxon>
        <taxon>Gammaproteobacteria</taxon>
        <taxon>Enterobacterales</taxon>
        <taxon>Enterobacteriaceae</taxon>
        <taxon>Shigella</taxon>
    </lineage>
</organism>
<comment type="function">
    <text evidence="1">During stationary phase, binds the chromosome non-specifically, forming a highly ordered and stable dps-DNA co-crystal within which chromosomal DNA is condensed and protected from diverse damages. It protects DNA from oxidative damage by sequestering intracellular Fe(2+) ion and storing it in the form of Fe(3+) oxyhydroxide mineral, which can be released after reduction. One hydrogen peroxide oxidizes two Fe(2+) ions, which prevents hydroxyl radical production by the Fenton reaction. Dps also protects the cell from UV and gamma irradiation, iron and copper toxicity, thermal stress and acid and base shocks. Also shows a weak catalase activity (By similarity).</text>
</comment>
<comment type="catalytic activity">
    <reaction>
        <text>2 Fe(2+) + H2O2 + 2 H(+) = 2 Fe(3+) + 2 H2O</text>
        <dbReference type="Rhea" id="RHEA:48712"/>
        <dbReference type="ChEBI" id="CHEBI:15377"/>
        <dbReference type="ChEBI" id="CHEBI:15378"/>
        <dbReference type="ChEBI" id="CHEBI:16240"/>
        <dbReference type="ChEBI" id="CHEBI:29033"/>
        <dbReference type="ChEBI" id="CHEBI:29034"/>
    </reaction>
</comment>
<comment type="subunit">
    <text evidence="1">Homododecamer. The 12 subunits form a hollow sphere into which the mineral iron core of up to 500 Fe(3+) can be deposited (By similarity).</text>
</comment>
<comment type="subcellular location">
    <subcellularLocation>
        <location evidence="1">Cytoplasm</location>
        <location evidence="1">Nucleoid</location>
    </subcellularLocation>
</comment>
<comment type="domain">
    <text evidence="1">12 dinuclear ferroxidase centers are located at the interfaces between subunits related by 2-fold symmetry axes.</text>
</comment>
<comment type="similarity">
    <text evidence="2">Belongs to the Dps family.</text>
</comment>
<name>DPS_SHIFL</name>